<organism>
    <name type="scientific">Zea mays</name>
    <name type="common">Maize</name>
    <dbReference type="NCBI Taxonomy" id="4577"/>
    <lineage>
        <taxon>Eukaryota</taxon>
        <taxon>Viridiplantae</taxon>
        <taxon>Streptophyta</taxon>
        <taxon>Embryophyta</taxon>
        <taxon>Tracheophyta</taxon>
        <taxon>Spermatophyta</taxon>
        <taxon>Magnoliopsida</taxon>
        <taxon>Liliopsida</taxon>
        <taxon>Poales</taxon>
        <taxon>Poaceae</taxon>
        <taxon>PACMAD clade</taxon>
        <taxon>Panicoideae</taxon>
        <taxon>Andropogonodae</taxon>
        <taxon>Andropogoneae</taxon>
        <taxon>Tripsacinae</taxon>
        <taxon>Zea</taxon>
    </lineage>
</organism>
<protein>
    <recommendedName>
        <fullName>Indole-3-acetaldehyde oxidase</fullName>
        <shortName>IAA oxidase</shortName>
        <ecNumber>1.2.3.7</ecNumber>
    </recommendedName>
    <alternativeName>
        <fullName>Aldehyde oxidase-2</fullName>
        <shortName>ZmAO-2</shortName>
    </alternativeName>
</protein>
<accession>O23888</accession>
<sequence>MEMGKAAAVVLAVNGKRYEAAGVDPSTTLLEFLRTHTPVRGPKLGCGEGGCGACVVLVSKYDPATDEVTEFSASSCLTLLHSVDRCSVTTSEGIGNTKDGYHPVQQRLSGFHASQCGFCTPGMCMSIFSALVKADKAANRPAPPAGFSKLTSSEAEKAVSGNLCRCTGYRPIVDACKSFAADVDLEDLGLNCFWKKGDEPADVSKLPGYNSGDVCTFPDFLKSEMKSSIQQANSAPVPVSDDGWYRPRSIDELHRLFQSSSFDENSVKIVASNTGSGVYKDQDLYDKYIDIKGIPELSVINRNDKGIELGSVVSISKAIEVLSDGNLVFRKIAGHLNKVASPFVRNTATIGGNIVMAQRLPFASDIATILLAAGSTVTIQVASKRLCFTLEEFLQQPPCDSRTLLLSIFIPEWGSNDVTFETFRAAPRPLGNAVSYVNSAFLARTSLDAASKDHLIEDICLAFGAYGADHAIRARKVEDYLKGKTVSSSVILEAVRLLKGSIKPSEGSTHPEYRISLAVSFLFTFLSSLANSLNESAKVSGTNEHSPEKQLKLDINDLPIRSRQEIFFTDAYKPVGKAIKKAGVEIQASGEAVYVDDIPAPKDCLYGAFIYSTHPHAHVKSINFKPSLASQKIITVITAKDIPSGGQNVGYSFPMIGEEALFADPVAEFAGQNIGVVIAQTQKYAYMAAKQAIIEYSTENLQPPILTIEDAIERSSFFQTLPFVAPKPVGDYDKGMSEADHKILSAEVKIESQYFFYMEPQVALAIPDEDNCITIYFSTQLPESTQNVVAKCVGIPFHNVRVITRRVGGGFGGKALKSMHVACACAVAALKLQRPVRMYLDRKTDMIMAGGRHPMKVKYSVGFKSNGKITALHLDLGINGGISPDMSPMIAAPVIGSLKKYNWGNLAFDTKVCKTNVSSKSSMRAPGDAQGSFIAEAIIEHVASALSADTNTIRRKNLHDFESLAVFFGDSAGEASTYSLVTMFDKLASSPEYQHRAEMVEQFNRSNKWKKRGISCVPVTYEVQLRPTPGKVSIMNDGSIAVEVGGVELGQGLWTKVKQMTAFGLGQLCPGGGESLLDKVRVIQADTLSMIQGGVTGGSTTSETSCEAVRKSCVALVESLKPIKENLEAKTGTVEWSALIAQASMASVNLSAHAYWTPDPTFTSYLNYGAGTSEVEIDVLTGATTILRSDLVYDCGQSLNPAVDLGQVEGAFVQGVGFFTNEEYATNSDGLVIHDGTWTYKIPTVDTIPKQFNVELINSARDQKRVLSSKASGEPPLLLASSVHCAMREAIRAARKEFSVCTGPANSAITFQMDVPATMPVVKELCGLDVVERYLESVSAASPTNTAKA</sequence>
<reference key="1">
    <citation type="journal article" date="1997" name="J. Biol. Chem.">
        <title>Cloning and molecular characterization of plant aldehyde oxidase.</title>
        <authorList>
            <person name="Sekimoto H."/>
            <person name="Seo M."/>
            <person name="Dohmae N."/>
            <person name="Takio K."/>
            <person name="Kamiya Y."/>
            <person name="Koshiba T."/>
        </authorList>
    </citation>
    <scope>NUCLEOTIDE SEQUENCE [MRNA]</scope>
    <scope>TISSUE SPECIFICITY</scope>
    <source>
        <strain>cv. Golden Cross Bantam 70</strain>
        <tissue>Coleoptile</tissue>
    </source>
</reference>
<gene>
    <name type="primary">AO2</name>
</gene>
<name>ALDO2_MAIZE</name>
<evidence type="ECO:0000250" key="1"/>
<evidence type="ECO:0000255" key="2">
    <source>
        <dbReference type="PROSITE-ProRule" id="PRU00465"/>
    </source>
</evidence>
<evidence type="ECO:0000255" key="3">
    <source>
        <dbReference type="PROSITE-ProRule" id="PRU00718"/>
    </source>
</evidence>
<evidence type="ECO:0000269" key="4">
    <source>
    </source>
</evidence>
<evidence type="ECO:0000305" key="5"/>
<proteinExistence type="evidence at transcript level"/>
<feature type="chain" id="PRO_0000418843" description="Indole-3-acetaldehyde oxidase">
    <location>
        <begin position="1"/>
        <end position="1349"/>
    </location>
</feature>
<feature type="domain" description="2Fe-2S ferredoxin-type" evidence="2">
    <location>
        <begin position="7"/>
        <end position="94"/>
    </location>
</feature>
<feature type="domain" description="FAD-binding PCMH-type" evidence="3">
    <location>
        <begin position="237"/>
        <end position="415"/>
    </location>
</feature>
<feature type="binding site" evidence="2">
    <location>
        <position position="46"/>
    </location>
    <ligand>
        <name>[2Fe-2S] cluster</name>
        <dbReference type="ChEBI" id="CHEBI:190135"/>
    </ligand>
</feature>
<feature type="binding site" evidence="2">
    <location>
        <position position="51"/>
    </location>
    <ligand>
        <name>[2Fe-2S] cluster</name>
        <dbReference type="ChEBI" id="CHEBI:190135"/>
    </ligand>
</feature>
<feature type="binding site" evidence="2">
    <location>
        <position position="54"/>
    </location>
    <ligand>
        <name>[2Fe-2S] cluster</name>
        <dbReference type="ChEBI" id="CHEBI:190135"/>
    </ligand>
</feature>
<comment type="function">
    <text>In higher plants aldehyde oxidases (AO) appear to be homo- and heterodimeric assemblies of AO subunits with probably different physiological functions. Involved in the biosynthesis of auxin.</text>
</comment>
<comment type="catalytic activity">
    <reaction>
        <text>indole-3-acetaldehyde + O2 + H2O = (indol-3-yl)acetate + H2O2 + H(+)</text>
        <dbReference type="Rhea" id="RHEA:16277"/>
        <dbReference type="ChEBI" id="CHEBI:15377"/>
        <dbReference type="ChEBI" id="CHEBI:15378"/>
        <dbReference type="ChEBI" id="CHEBI:15379"/>
        <dbReference type="ChEBI" id="CHEBI:16240"/>
        <dbReference type="ChEBI" id="CHEBI:18086"/>
        <dbReference type="ChEBI" id="CHEBI:30854"/>
        <dbReference type="EC" id="1.2.3.7"/>
    </reaction>
</comment>
<comment type="cofactor">
    <cofactor evidence="1">
        <name>[2Fe-2S] cluster</name>
        <dbReference type="ChEBI" id="CHEBI:190135"/>
    </cofactor>
    <text evidence="1">Binds 2 [2Fe-2S] clusters.</text>
</comment>
<comment type="cofactor">
    <cofactor evidence="1">
        <name>FAD</name>
        <dbReference type="ChEBI" id="CHEBI:57692"/>
    </cofactor>
</comment>
<comment type="cofactor">
    <cofactor evidence="1">
        <name>Mo-molybdopterin</name>
        <dbReference type="ChEBI" id="CHEBI:71302"/>
    </cofactor>
    <text evidence="1">Binds 1 Mo-molybdopterin (Mo-MPT) cofactor per subunit.</text>
</comment>
<comment type="subunit">
    <text evidence="1">Aldehyde oxidases (AO) are homodimers and heterodimers of AO subunits.</text>
</comment>
<comment type="subcellular location">
    <subcellularLocation>
        <location evidence="5">Cytoplasm</location>
    </subcellularLocation>
</comment>
<comment type="tissue specificity">
    <text evidence="4">Mostly expressed in coleoptiles, and, to a lower extent, in mesocotyl and roots.</text>
</comment>
<comment type="similarity">
    <text evidence="5">Belongs to the xanthine dehydrogenase family.</text>
</comment>
<keyword id="KW-0001">2Fe-2S</keyword>
<keyword id="KW-0937">Abscisic acid biosynthesis</keyword>
<keyword id="KW-0073">Auxin biosynthesis</keyword>
<keyword id="KW-0963">Cytoplasm</keyword>
<keyword id="KW-0274">FAD</keyword>
<keyword id="KW-0285">Flavoprotein</keyword>
<keyword id="KW-0408">Iron</keyword>
<keyword id="KW-0411">Iron-sulfur</keyword>
<keyword id="KW-0479">Metal-binding</keyword>
<keyword id="KW-0500">Molybdenum</keyword>
<keyword id="KW-0520">NAD</keyword>
<keyword id="KW-0560">Oxidoreductase</keyword>
<keyword id="KW-1185">Reference proteome</keyword>
<dbReference type="EC" id="1.2.3.7"/>
<dbReference type="EMBL" id="D88452">
    <property type="protein sequence ID" value="BAA23227.1"/>
    <property type="molecule type" value="mRNA"/>
</dbReference>
<dbReference type="PIR" id="T01699">
    <property type="entry name" value="T01699"/>
</dbReference>
<dbReference type="RefSeq" id="NP_001105309.1">
    <property type="nucleotide sequence ID" value="NM_001111839.1"/>
</dbReference>
<dbReference type="SMR" id="O23888"/>
<dbReference type="FunCoup" id="O23888">
    <property type="interactions" value="10"/>
</dbReference>
<dbReference type="STRING" id="4577.O23888"/>
<dbReference type="PaxDb" id="4577-GRMZM5G899851_P01"/>
<dbReference type="GeneID" id="542229"/>
<dbReference type="KEGG" id="zma:542229"/>
<dbReference type="eggNOG" id="KOG0430">
    <property type="taxonomic scope" value="Eukaryota"/>
</dbReference>
<dbReference type="InParanoid" id="O23888"/>
<dbReference type="OrthoDB" id="8300278at2759"/>
<dbReference type="BRENDA" id="1.2.3.1">
    <property type="organism ID" value="6752"/>
</dbReference>
<dbReference type="Proteomes" id="UP000007305">
    <property type="component" value="Unplaced"/>
</dbReference>
<dbReference type="ExpressionAtlas" id="O23888">
    <property type="expression patterns" value="baseline and differential"/>
</dbReference>
<dbReference type="GO" id="GO:0005737">
    <property type="term" value="C:cytoplasm"/>
    <property type="evidence" value="ECO:0007669"/>
    <property type="project" value="UniProtKB-SubCell"/>
</dbReference>
<dbReference type="GO" id="GO:0051537">
    <property type="term" value="F:2 iron, 2 sulfur cluster binding"/>
    <property type="evidence" value="ECO:0007669"/>
    <property type="project" value="UniProtKB-KW"/>
</dbReference>
<dbReference type="GO" id="GO:0071949">
    <property type="term" value="F:FAD binding"/>
    <property type="evidence" value="ECO:0000250"/>
    <property type="project" value="UniProtKB"/>
</dbReference>
<dbReference type="GO" id="GO:0050302">
    <property type="term" value="F:indole-3-acetaldehyde oxidase activity"/>
    <property type="evidence" value="ECO:0000250"/>
    <property type="project" value="UniProtKB"/>
</dbReference>
<dbReference type="GO" id="GO:0005506">
    <property type="term" value="F:iron ion binding"/>
    <property type="evidence" value="ECO:0007669"/>
    <property type="project" value="InterPro"/>
</dbReference>
<dbReference type="GO" id="GO:0043546">
    <property type="term" value="F:molybdopterin cofactor binding"/>
    <property type="evidence" value="ECO:0000250"/>
    <property type="project" value="UniProtKB"/>
</dbReference>
<dbReference type="GO" id="GO:0016491">
    <property type="term" value="F:oxidoreductase activity"/>
    <property type="evidence" value="ECO:0000318"/>
    <property type="project" value="GO_Central"/>
</dbReference>
<dbReference type="GO" id="GO:0009688">
    <property type="term" value="P:abscisic acid biosynthetic process"/>
    <property type="evidence" value="ECO:0007669"/>
    <property type="project" value="UniProtKB-KW"/>
</dbReference>
<dbReference type="GO" id="GO:0009851">
    <property type="term" value="P:auxin biosynthetic process"/>
    <property type="evidence" value="ECO:0000250"/>
    <property type="project" value="UniProtKB"/>
</dbReference>
<dbReference type="FunFam" id="1.10.150.120:FF:000006">
    <property type="entry name" value="Aldehyde oxidase"/>
    <property type="match status" value="1"/>
</dbReference>
<dbReference type="FunFam" id="3.30.465.10:FF:000013">
    <property type="entry name" value="Aldehyde oxidase"/>
    <property type="match status" value="1"/>
</dbReference>
<dbReference type="FunFam" id="3.30.365.10:FF:000008">
    <property type="entry name" value="Aldehyde oxidase1"/>
    <property type="match status" value="1"/>
</dbReference>
<dbReference type="FunFam" id="3.30.390.50:FF:000003">
    <property type="entry name" value="Aldehyde oxidase1"/>
    <property type="match status" value="1"/>
</dbReference>
<dbReference type="FunFam" id="3.90.1170.50:FF:000007">
    <property type="entry name" value="Aldehyde oxidase1"/>
    <property type="match status" value="1"/>
</dbReference>
<dbReference type="FunFam" id="3.30.365.10:FF:000001">
    <property type="entry name" value="Xanthine dehydrogenase oxidase"/>
    <property type="match status" value="1"/>
</dbReference>
<dbReference type="FunFam" id="3.10.20.30:FF:000012">
    <property type="entry name" value="Xanthine dehydrogenase/oxidase"/>
    <property type="match status" value="1"/>
</dbReference>
<dbReference type="Gene3D" id="3.10.20.30">
    <property type="match status" value="1"/>
</dbReference>
<dbReference type="Gene3D" id="3.30.465.10">
    <property type="match status" value="1"/>
</dbReference>
<dbReference type="Gene3D" id="1.10.150.120">
    <property type="entry name" value="[2Fe-2S]-binding domain"/>
    <property type="match status" value="1"/>
</dbReference>
<dbReference type="Gene3D" id="3.90.1170.50">
    <property type="entry name" value="Aldehyde oxidase/xanthine dehydrogenase, a/b hammerhead"/>
    <property type="match status" value="1"/>
</dbReference>
<dbReference type="Gene3D" id="3.30.365.10">
    <property type="entry name" value="Aldehyde oxidase/xanthine dehydrogenase, molybdopterin binding domain"/>
    <property type="match status" value="4"/>
</dbReference>
<dbReference type="Gene3D" id="3.30.390.50">
    <property type="entry name" value="CO dehydrogenase flavoprotein, C-terminal domain"/>
    <property type="match status" value="1"/>
</dbReference>
<dbReference type="InterPro" id="IPR002888">
    <property type="entry name" value="2Fe-2S-bd"/>
</dbReference>
<dbReference type="InterPro" id="IPR036884">
    <property type="entry name" value="2Fe-2S-bd_dom_sf"/>
</dbReference>
<dbReference type="InterPro" id="IPR036010">
    <property type="entry name" value="2Fe-2S_ferredoxin-like_sf"/>
</dbReference>
<dbReference type="InterPro" id="IPR001041">
    <property type="entry name" value="2Fe-2S_ferredoxin-type"/>
</dbReference>
<dbReference type="InterPro" id="IPR006058">
    <property type="entry name" value="2Fe2S_fd_BS"/>
</dbReference>
<dbReference type="InterPro" id="IPR000674">
    <property type="entry name" value="Ald_Oxase/Xan_DH_a/b"/>
</dbReference>
<dbReference type="InterPro" id="IPR036856">
    <property type="entry name" value="Ald_Oxase/Xan_DH_a/b_sf"/>
</dbReference>
<dbReference type="InterPro" id="IPR016208">
    <property type="entry name" value="Ald_Oxase/xanthine_DH-like"/>
</dbReference>
<dbReference type="InterPro" id="IPR008274">
    <property type="entry name" value="AldOxase/xan_DH_MoCoBD1"/>
</dbReference>
<dbReference type="InterPro" id="IPR046867">
    <property type="entry name" value="AldOxase/xan_DH_MoCoBD2"/>
</dbReference>
<dbReference type="InterPro" id="IPR037165">
    <property type="entry name" value="AldOxase/xan_DH_Mopterin-bd_sf"/>
</dbReference>
<dbReference type="InterPro" id="IPR012675">
    <property type="entry name" value="Beta-grasp_dom_sf"/>
</dbReference>
<dbReference type="InterPro" id="IPR005107">
    <property type="entry name" value="CO_DH_flav_C"/>
</dbReference>
<dbReference type="InterPro" id="IPR036683">
    <property type="entry name" value="CO_DH_flav_C_dom_sf"/>
</dbReference>
<dbReference type="InterPro" id="IPR016166">
    <property type="entry name" value="FAD-bd_PCMH"/>
</dbReference>
<dbReference type="InterPro" id="IPR036318">
    <property type="entry name" value="FAD-bd_PCMH-like_sf"/>
</dbReference>
<dbReference type="InterPro" id="IPR016169">
    <property type="entry name" value="FAD-bd_PCMH_sub2"/>
</dbReference>
<dbReference type="InterPro" id="IPR002346">
    <property type="entry name" value="Mopterin_DH_FAD-bd"/>
</dbReference>
<dbReference type="PANTHER" id="PTHR11908:SF134">
    <property type="entry name" value="INDOLE-3-ACETALDEHYDE OXIDASE"/>
    <property type="match status" value="1"/>
</dbReference>
<dbReference type="PANTHER" id="PTHR11908">
    <property type="entry name" value="XANTHINE DEHYDROGENASE"/>
    <property type="match status" value="1"/>
</dbReference>
<dbReference type="Pfam" id="PF01315">
    <property type="entry name" value="Ald_Xan_dh_C"/>
    <property type="match status" value="1"/>
</dbReference>
<dbReference type="Pfam" id="PF03450">
    <property type="entry name" value="CO_deh_flav_C"/>
    <property type="match status" value="1"/>
</dbReference>
<dbReference type="Pfam" id="PF00941">
    <property type="entry name" value="FAD_binding_5"/>
    <property type="match status" value="1"/>
</dbReference>
<dbReference type="Pfam" id="PF00111">
    <property type="entry name" value="Fer2"/>
    <property type="match status" value="1"/>
</dbReference>
<dbReference type="Pfam" id="PF01799">
    <property type="entry name" value="Fer2_2"/>
    <property type="match status" value="1"/>
</dbReference>
<dbReference type="Pfam" id="PF02738">
    <property type="entry name" value="MoCoBD_1"/>
    <property type="match status" value="1"/>
</dbReference>
<dbReference type="Pfam" id="PF20256">
    <property type="entry name" value="MoCoBD_2"/>
    <property type="match status" value="1"/>
</dbReference>
<dbReference type="PIRSF" id="PIRSF000127">
    <property type="entry name" value="Xanthine_DH"/>
    <property type="match status" value="1"/>
</dbReference>
<dbReference type="SMART" id="SM01008">
    <property type="entry name" value="Ald_Xan_dh_C"/>
    <property type="match status" value="1"/>
</dbReference>
<dbReference type="SMART" id="SM01092">
    <property type="entry name" value="CO_deh_flav_C"/>
    <property type="match status" value="1"/>
</dbReference>
<dbReference type="SUPFAM" id="SSF54292">
    <property type="entry name" value="2Fe-2S ferredoxin-like"/>
    <property type="match status" value="1"/>
</dbReference>
<dbReference type="SUPFAM" id="SSF55447">
    <property type="entry name" value="CO dehydrogenase flavoprotein C-terminal domain-like"/>
    <property type="match status" value="1"/>
</dbReference>
<dbReference type="SUPFAM" id="SSF47741">
    <property type="entry name" value="CO dehydrogenase ISP C-domain like"/>
    <property type="match status" value="1"/>
</dbReference>
<dbReference type="SUPFAM" id="SSF54665">
    <property type="entry name" value="CO dehydrogenase molybdoprotein N-domain-like"/>
    <property type="match status" value="1"/>
</dbReference>
<dbReference type="SUPFAM" id="SSF56176">
    <property type="entry name" value="FAD-binding/transporter-associated domain-like"/>
    <property type="match status" value="1"/>
</dbReference>
<dbReference type="SUPFAM" id="SSF56003">
    <property type="entry name" value="Molybdenum cofactor-binding domain"/>
    <property type="match status" value="1"/>
</dbReference>
<dbReference type="PROSITE" id="PS00197">
    <property type="entry name" value="2FE2S_FER_1"/>
    <property type="match status" value="1"/>
</dbReference>
<dbReference type="PROSITE" id="PS51085">
    <property type="entry name" value="2FE2S_FER_2"/>
    <property type="match status" value="1"/>
</dbReference>
<dbReference type="PROSITE" id="PS51387">
    <property type="entry name" value="FAD_PCMH"/>
    <property type="match status" value="1"/>
</dbReference>